<protein>
    <recommendedName>
        <fullName evidence="1">Serine--tRNA ligase</fullName>
        <ecNumber evidence="1">6.1.1.11</ecNumber>
    </recommendedName>
    <alternativeName>
        <fullName evidence="1">Seryl-tRNA synthetase</fullName>
        <shortName evidence="1">SerRS</shortName>
    </alternativeName>
    <alternativeName>
        <fullName evidence="1">Seryl-tRNA(Ser/Sec) synthetase</fullName>
    </alternativeName>
</protein>
<accession>Q87QP1</accession>
<gene>
    <name evidence="1" type="primary">serS</name>
    <name type="ordered locus">VP1108</name>
</gene>
<sequence>MLDSKLLRTELDETAAKLARRGFKLDVETIRKLEEQRKSIQVEVENLQSTRNSISKQIGQKMAAGDKEGAEEIKKQIGTLGSDLDAKKVELEQVMAQLDEFTLSVPNIPADEVPDGKDENDNVEISRWGEPKTYDFDLKDHVDLGEMGGGLDFASAVKITGARFIVMKGQFARLHRAIAQFMLDLHTEEHGYTEMYVPYLVNSDSLFGTGQLPKFGKDLFHTEPLAEKVNDEEPRKLSLIPTAEVPVTNLVRDTITDEADLPIKMTAHTPCFRSEAGSYGRDTRGLIRMHQFDKVELVQITKPEDSMTALEELTGHAEKVLQLLELPYRKVVLCTGDMGFGARKTYDLEVWVPAQETYREISSCSNMWDFQARRMQARFRRKGEKKPELVHTLNGSGLAVGRTMVAILENNQEADGRIAIPAVLQKYMGGATHIG</sequence>
<name>SYS_VIBPA</name>
<dbReference type="EC" id="6.1.1.11" evidence="1"/>
<dbReference type="EMBL" id="BA000031">
    <property type="protein sequence ID" value="BAC59371.1"/>
    <property type="molecule type" value="Genomic_DNA"/>
</dbReference>
<dbReference type="RefSeq" id="NP_797487.1">
    <property type="nucleotide sequence ID" value="NC_004603.1"/>
</dbReference>
<dbReference type="RefSeq" id="WP_005487368.1">
    <property type="nucleotide sequence ID" value="NC_004603.1"/>
</dbReference>
<dbReference type="SMR" id="Q87QP1"/>
<dbReference type="GeneID" id="1188613"/>
<dbReference type="KEGG" id="vpa:VP1108"/>
<dbReference type="PATRIC" id="fig|223926.6.peg.1050"/>
<dbReference type="eggNOG" id="COG0172">
    <property type="taxonomic scope" value="Bacteria"/>
</dbReference>
<dbReference type="HOGENOM" id="CLU_023797_1_1_6"/>
<dbReference type="UniPathway" id="UPA00906">
    <property type="reaction ID" value="UER00895"/>
</dbReference>
<dbReference type="Proteomes" id="UP000002493">
    <property type="component" value="Chromosome 1"/>
</dbReference>
<dbReference type="GO" id="GO:0005737">
    <property type="term" value="C:cytoplasm"/>
    <property type="evidence" value="ECO:0007669"/>
    <property type="project" value="UniProtKB-SubCell"/>
</dbReference>
<dbReference type="GO" id="GO:0005524">
    <property type="term" value="F:ATP binding"/>
    <property type="evidence" value="ECO:0007669"/>
    <property type="project" value="UniProtKB-UniRule"/>
</dbReference>
<dbReference type="GO" id="GO:0004828">
    <property type="term" value="F:serine-tRNA ligase activity"/>
    <property type="evidence" value="ECO:0007669"/>
    <property type="project" value="UniProtKB-UniRule"/>
</dbReference>
<dbReference type="GO" id="GO:0016260">
    <property type="term" value="P:selenocysteine biosynthetic process"/>
    <property type="evidence" value="ECO:0007669"/>
    <property type="project" value="UniProtKB-UniRule"/>
</dbReference>
<dbReference type="GO" id="GO:0006434">
    <property type="term" value="P:seryl-tRNA aminoacylation"/>
    <property type="evidence" value="ECO:0007669"/>
    <property type="project" value="UniProtKB-UniRule"/>
</dbReference>
<dbReference type="CDD" id="cd00770">
    <property type="entry name" value="SerRS_core"/>
    <property type="match status" value="1"/>
</dbReference>
<dbReference type="FunFam" id="3.30.930.10:FF:000018">
    <property type="entry name" value="Serine--tRNA ligase"/>
    <property type="match status" value="1"/>
</dbReference>
<dbReference type="Gene3D" id="3.30.930.10">
    <property type="entry name" value="Bira Bifunctional Protein, Domain 2"/>
    <property type="match status" value="1"/>
</dbReference>
<dbReference type="Gene3D" id="1.10.287.40">
    <property type="entry name" value="Serine-tRNA synthetase, tRNA binding domain"/>
    <property type="match status" value="1"/>
</dbReference>
<dbReference type="HAMAP" id="MF_00176">
    <property type="entry name" value="Ser_tRNA_synth_type1"/>
    <property type="match status" value="1"/>
</dbReference>
<dbReference type="InterPro" id="IPR002314">
    <property type="entry name" value="aa-tRNA-synt_IIb"/>
</dbReference>
<dbReference type="InterPro" id="IPR006195">
    <property type="entry name" value="aa-tRNA-synth_II"/>
</dbReference>
<dbReference type="InterPro" id="IPR045864">
    <property type="entry name" value="aa-tRNA-synth_II/BPL/LPL"/>
</dbReference>
<dbReference type="InterPro" id="IPR002317">
    <property type="entry name" value="Ser-tRNA-ligase_type_1"/>
</dbReference>
<dbReference type="InterPro" id="IPR015866">
    <property type="entry name" value="Ser-tRNA-synth_1_N"/>
</dbReference>
<dbReference type="InterPro" id="IPR042103">
    <property type="entry name" value="SerRS_1_N_sf"/>
</dbReference>
<dbReference type="InterPro" id="IPR033729">
    <property type="entry name" value="SerRS_core"/>
</dbReference>
<dbReference type="InterPro" id="IPR010978">
    <property type="entry name" value="tRNA-bd_arm"/>
</dbReference>
<dbReference type="NCBIfam" id="TIGR00414">
    <property type="entry name" value="serS"/>
    <property type="match status" value="1"/>
</dbReference>
<dbReference type="PANTHER" id="PTHR43697:SF1">
    <property type="entry name" value="SERINE--TRNA LIGASE"/>
    <property type="match status" value="1"/>
</dbReference>
<dbReference type="PANTHER" id="PTHR43697">
    <property type="entry name" value="SERYL-TRNA SYNTHETASE"/>
    <property type="match status" value="1"/>
</dbReference>
<dbReference type="Pfam" id="PF02403">
    <property type="entry name" value="Seryl_tRNA_N"/>
    <property type="match status" value="1"/>
</dbReference>
<dbReference type="Pfam" id="PF00587">
    <property type="entry name" value="tRNA-synt_2b"/>
    <property type="match status" value="1"/>
</dbReference>
<dbReference type="PIRSF" id="PIRSF001529">
    <property type="entry name" value="Ser-tRNA-synth_IIa"/>
    <property type="match status" value="1"/>
</dbReference>
<dbReference type="PRINTS" id="PR00981">
    <property type="entry name" value="TRNASYNTHSER"/>
</dbReference>
<dbReference type="SUPFAM" id="SSF55681">
    <property type="entry name" value="Class II aaRS and biotin synthetases"/>
    <property type="match status" value="1"/>
</dbReference>
<dbReference type="SUPFAM" id="SSF46589">
    <property type="entry name" value="tRNA-binding arm"/>
    <property type="match status" value="1"/>
</dbReference>
<dbReference type="PROSITE" id="PS50862">
    <property type="entry name" value="AA_TRNA_LIGASE_II"/>
    <property type="match status" value="1"/>
</dbReference>
<proteinExistence type="inferred from homology"/>
<evidence type="ECO:0000255" key="1">
    <source>
        <dbReference type="HAMAP-Rule" id="MF_00176"/>
    </source>
</evidence>
<feature type="chain" id="PRO_0000122155" description="Serine--tRNA ligase">
    <location>
        <begin position="1"/>
        <end position="435"/>
    </location>
</feature>
<feature type="binding site" evidence="1">
    <location>
        <begin position="242"/>
        <end position="244"/>
    </location>
    <ligand>
        <name>L-serine</name>
        <dbReference type="ChEBI" id="CHEBI:33384"/>
    </ligand>
</feature>
<feature type="binding site" evidence="1">
    <location>
        <begin position="273"/>
        <end position="275"/>
    </location>
    <ligand>
        <name>ATP</name>
        <dbReference type="ChEBI" id="CHEBI:30616"/>
    </ligand>
</feature>
<feature type="binding site" evidence="1">
    <location>
        <position position="296"/>
    </location>
    <ligand>
        <name>L-serine</name>
        <dbReference type="ChEBI" id="CHEBI:33384"/>
    </ligand>
</feature>
<feature type="binding site" evidence="1">
    <location>
        <begin position="360"/>
        <end position="363"/>
    </location>
    <ligand>
        <name>ATP</name>
        <dbReference type="ChEBI" id="CHEBI:30616"/>
    </ligand>
</feature>
<feature type="binding site" evidence="1">
    <location>
        <position position="396"/>
    </location>
    <ligand>
        <name>L-serine</name>
        <dbReference type="ChEBI" id="CHEBI:33384"/>
    </ligand>
</feature>
<keyword id="KW-0030">Aminoacyl-tRNA synthetase</keyword>
<keyword id="KW-0067">ATP-binding</keyword>
<keyword id="KW-0963">Cytoplasm</keyword>
<keyword id="KW-0436">Ligase</keyword>
<keyword id="KW-0547">Nucleotide-binding</keyword>
<keyword id="KW-0648">Protein biosynthesis</keyword>
<reference key="1">
    <citation type="journal article" date="2003" name="Lancet">
        <title>Genome sequence of Vibrio parahaemolyticus: a pathogenic mechanism distinct from that of V. cholerae.</title>
        <authorList>
            <person name="Makino K."/>
            <person name="Oshima K."/>
            <person name="Kurokawa K."/>
            <person name="Yokoyama K."/>
            <person name="Uda T."/>
            <person name="Tagomori K."/>
            <person name="Iijima Y."/>
            <person name="Najima M."/>
            <person name="Nakano M."/>
            <person name="Yamashita A."/>
            <person name="Kubota Y."/>
            <person name="Kimura S."/>
            <person name="Yasunaga T."/>
            <person name="Honda T."/>
            <person name="Shinagawa H."/>
            <person name="Hattori M."/>
            <person name="Iida T."/>
        </authorList>
    </citation>
    <scope>NUCLEOTIDE SEQUENCE [LARGE SCALE GENOMIC DNA]</scope>
    <source>
        <strain>RIMD 2210633</strain>
    </source>
</reference>
<organism>
    <name type="scientific">Vibrio parahaemolyticus serotype O3:K6 (strain RIMD 2210633)</name>
    <dbReference type="NCBI Taxonomy" id="223926"/>
    <lineage>
        <taxon>Bacteria</taxon>
        <taxon>Pseudomonadati</taxon>
        <taxon>Pseudomonadota</taxon>
        <taxon>Gammaproteobacteria</taxon>
        <taxon>Vibrionales</taxon>
        <taxon>Vibrionaceae</taxon>
        <taxon>Vibrio</taxon>
    </lineage>
</organism>
<comment type="function">
    <text evidence="1">Catalyzes the attachment of serine to tRNA(Ser). Is also able to aminoacylate tRNA(Sec) with serine, to form the misacylated tRNA L-seryl-tRNA(Sec), which will be further converted into selenocysteinyl-tRNA(Sec).</text>
</comment>
<comment type="catalytic activity">
    <reaction evidence="1">
        <text>tRNA(Ser) + L-serine + ATP = L-seryl-tRNA(Ser) + AMP + diphosphate + H(+)</text>
        <dbReference type="Rhea" id="RHEA:12292"/>
        <dbReference type="Rhea" id="RHEA-COMP:9669"/>
        <dbReference type="Rhea" id="RHEA-COMP:9703"/>
        <dbReference type="ChEBI" id="CHEBI:15378"/>
        <dbReference type="ChEBI" id="CHEBI:30616"/>
        <dbReference type="ChEBI" id="CHEBI:33019"/>
        <dbReference type="ChEBI" id="CHEBI:33384"/>
        <dbReference type="ChEBI" id="CHEBI:78442"/>
        <dbReference type="ChEBI" id="CHEBI:78533"/>
        <dbReference type="ChEBI" id="CHEBI:456215"/>
        <dbReference type="EC" id="6.1.1.11"/>
    </reaction>
</comment>
<comment type="catalytic activity">
    <reaction evidence="1">
        <text>tRNA(Sec) + L-serine + ATP = L-seryl-tRNA(Sec) + AMP + diphosphate + H(+)</text>
        <dbReference type="Rhea" id="RHEA:42580"/>
        <dbReference type="Rhea" id="RHEA-COMP:9742"/>
        <dbReference type="Rhea" id="RHEA-COMP:10128"/>
        <dbReference type="ChEBI" id="CHEBI:15378"/>
        <dbReference type="ChEBI" id="CHEBI:30616"/>
        <dbReference type="ChEBI" id="CHEBI:33019"/>
        <dbReference type="ChEBI" id="CHEBI:33384"/>
        <dbReference type="ChEBI" id="CHEBI:78442"/>
        <dbReference type="ChEBI" id="CHEBI:78533"/>
        <dbReference type="ChEBI" id="CHEBI:456215"/>
        <dbReference type="EC" id="6.1.1.11"/>
    </reaction>
</comment>
<comment type="pathway">
    <text evidence="1">Aminoacyl-tRNA biosynthesis; selenocysteinyl-tRNA(Sec) biosynthesis; L-seryl-tRNA(Sec) from L-serine and tRNA(Sec): step 1/1.</text>
</comment>
<comment type="subunit">
    <text evidence="1">Homodimer. The tRNA molecule binds across the dimer.</text>
</comment>
<comment type="subcellular location">
    <subcellularLocation>
        <location evidence="1">Cytoplasm</location>
    </subcellularLocation>
</comment>
<comment type="domain">
    <text evidence="1">Consists of two distinct domains, a catalytic core and a N-terminal extension that is involved in tRNA binding.</text>
</comment>
<comment type="similarity">
    <text evidence="1">Belongs to the class-II aminoacyl-tRNA synthetase family. Type-1 seryl-tRNA synthetase subfamily.</text>
</comment>